<accession>P03876</accession>
<accession>A0A0A7NYJ2</accession>
<accession>Q9ZZX4</accession>
<organism>
    <name type="scientific">Saccharomyces cerevisiae (strain ATCC 204508 / S288c)</name>
    <name type="common">Baker's yeast</name>
    <dbReference type="NCBI Taxonomy" id="559292"/>
    <lineage>
        <taxon>Eukaryota</taxon>
        <taxon>Fungi</taxon>
        <taxon>Dikarya</taxon>
        <taxon>Ascomycota</taxon>
        <taxon>Saccharomycotina</taxon>
        <taxon>Saccharomycetes</taxon>
        <taxon>Saccharomycetales</taxon>
        <taxon>Saccharomycetaceae</taxon>
        <taxon>Saccharomyces</taxon>
    </lineage>
</organism>
<dbReference type="EMBL" id="V00694">
    <property type="protein sequence ID" value="CAA24060.1"/>
    <property type="status" value="ALT_SEQ"/>
    <property type="molecule type" value="Genomic_DNA"/>
</dbReference>
<dbReference type="EMBL" id="KP263414">
    <property type="protein sequence ID" value="AIZ98885.1"/>
    <property type="molecule type" value="Genomic_DNA"/>
</dbReference>
<dbReference type="PIR" id="A04509">
    <property type="entry name" value="QXBY32"/>
</dbReference>
<dbReference type="PIR" id="S78644">
    <property type="entry name" value="S78644"/>
</dbReference>
<dbReference type="RefSeq" id="NP_009309.1">
    <property type="nucleotide sequence ID" value="NC_001224.1"/>
</dbReference>
<dbReference type="SMR" id="P03876"/>
<dbReference type="BioGRID" id="34786">
    <property type="interactions" value="3"/>
</dbReference>
<dbReference type="FunCoup" id="P03876">
    <property type="interactions" value="74"/>
</dbReference>
<dbReference type="STRING" id="4932.Q0055"/>
<dbReference type="iPTMnet" id="P03876"/>
<dbReference type="PaxDb" id="4932-Q0055"/>
<dbReference type="PeptideAtlas" id="P03876"/>
<dbReference type="EnsemblFungi" id="Q0055_mRNA">
    <property type="protein sequence ID" value="Q0055"/>
    <property type="gene ID" value="Q0055"/>
</dbReference>
<dbReference type="GeneID" id="854594"/>
<dbReference type="KEGG" id="sce:Q0055"/>
<dbReference type="AGR" id="SGD:S000007262"/>
<dbReference type="SGD" id="S000007262">
    <property type="gene designation" value="AI2"/>
</dbReference>
<dbReference type="VEuPathDB" id="FungiDB:Q0055"/>
<dbReference type="eggNOG" id="KOG4768">
    <property type="taxonomic scope" value="Eukaryota"/>
</dbReference>
<dbReference type="GeneTree" id="ENSGT00730000113263"/>
<dbReference type="HOGENOM" id="CLU_013584_3_1_1"/>
<dbReference type="InParanoid" id="P03876"/>
<dbReference type="OrthoDB" id="3594036at2759"/>
<dbReference type="BioCyc" id="YEAST:G3O-34373-MONOMER"/>
<dbReference type="BioGRID-ORCS" id="854594">
    <property type="hits" value="0 hits in 10 CRISPR screens"/>
</dbReference>
<dbReference type="PRO" id="PR:P03876"/>
<dbReference type="Proteomes" id="UP000002311">
    <property type="component" value="Mitochondrion"/>
</dbReference>
<dbReference type="RNAct" id="P03876">
    <property type="molecule type" value="protein"/>
</dbReference>
<dbReference type="GO" id="GO:0016020">
    <property type="term" value="C:membrane"/>
    <property type="evidence" value="ECO:0007669"/>
    <property type="project" value="InterPro"/>
</dbReference>
<dbReference type="GO" id="GO:0005739">
    <property type="term" value="C:mitochondrion"/>
    <property type="evidence" value="ECO:0000314"/>
    <property type="project" value="SGD"/>
</dbReference>
<dbReference type="GO" id="GO:0004129">
    <property type="term" value="F:cytochrome-c oxidase activity"/>
    <property type="evidence" value="ECO:0007669"/>
    <property type="project" value="InterPro"/>
</dbReference>
<dbReference type="GO" id="GO:0020037">
    <property type="term" value="F:heme binding"/>
    <property type="evidence" value="ECO:0007669"/>
    <property type="project" value="InterPro"/>
</dbReference>
<dbReference type="GO" id="GO:0003964">
    <property type="term" value="F:RNA-directed DNA polymerase activity"/>
    <property type="evidence" value="ECO:0000314"/>
    <property type="project" value="SGD"/>
</dbReference>
<dbReference type="GO" id="GO:0009060">
    <property type="term" value="P:aerobic respiration"/>
    <property type="evidence" value="ECO:0007669"/>
    <property type="project" value="InterPro"/>
</dbReference>
<dbReference type="GO" id="GO:0006315">
    <property type="term" value="P:homing of group II introns"/>
    <property type="evidence" value="ECO:0000318"/>
    <property type="project" value="GO_Central"/>
</dbReference>
<dbReference type="GO" id="GO:0006314">
    <property type="term" value="P:intron homing"/>
    <property type="evidence" value="ECO:0000315"/>
    <property type="project" value="SGD"/>
</dbReference>
<dbReference type="GO" id="GO:0006397">
    <property type="term" value="P:mRNA processing"/>
    <property type="evidence" value="ECO:0007669"/>
    <property type="project" value="InterPro"/>
</dbReference>
<dbReference type="CDD" id="cd00085">
    <property type="entry name" value="HNHc"/>
    <property type="match status" value="1"/>
</dbReference>
<dbReference type="CDD" id="cd01651">
    <property type="entry name" value="RT_G2_intron"/>
    <property type="match status" value="1"/>
</dbReference>
<dbReference type="Gene3D" id="1.20.210.10">
    <property type="entry name" value="Cytochrome c oxidase-like, subunit I domain"/>
    <property type="match status" value="1"/>
</dbReference>
<dbReference type="InterPro" id="IPR049030">
    <property type="entry name" value="AI2M-like_HNH"/>
</dbReference>
<dbReference type="InterPro" id="IPR023616">
    <property type="entry name" value="Cyt_c_oxase-like_su1_dom"/>
</dbReference>
<dbReference type="InterPro" id="IPR036927">
    <property type="entry name" value="Cyt_c_oxase-like_su1_sf"/>
</dbReference>
<dbReference type="InterPro" id="IPR000883">
    <property type="entry name" value="Cyt_C_Oxase_1"/>
</dbReference>
<dbReference type="InterPro" id="IPR043502">
    <property type="entry name" value="DNA/RNA_pol_sf"/>
</dbReference>
<dbReference type="InterPro" id="IPR024937">
    <property type="entry name" value="Domain_X"/>
</dbReference>
<dbReference type="InterPro" id="IPR003615">
    <property type="entry name" value="HNH_nuc"/>
</dbReference>
<dbReference type="InterPro" id="IPR000477">
    <property type="entry name" value="RT_dom"/>
</dbReference>
<dbReference type="PANTHER" id="PTHR33642">
    <property type="entry name" value="COX1/OXI3 INTRON 1 PROTEIN-RELATED"/>
    <property type="match status" value="1"/>
</dbReference>
<dbReference type="PANTHER" id="PTHR33642:SF4">
    <property type="entry name" value="COX1_OXI3 INTRON 1 PROTEIN-RELATED"/>
    <property type="match status" value="1"/>
</dbReference>
<dbReference type="Pfam" id="PF21368">
    <property type="entry name" value="AI2M-like_HNH"/>
    <property type="match status" value="1"/>
</dbReference>
<dbReference type="Pfam" id="PF01348">
    <property type="entry name" value="Intron_maturas2"/>
    <property type="match status" value="1"/>
</dbReference>
<dbReference type="Pfam" id="PF00078">
    <property type="entry name" value="RVT_1"/>
    <property type="match status" value="1"/>
</dbReference>
<dbReference type="PRINTS" id="PR01165">
    <property type="entry name" value="CYCOXIDASEI"/>
</dbReference>
<dbReference type="SMART" id="SM00507">
    <property type="entry name" value="HNHc"/>
    <property type="match status" value="1"/>
</dbReference>
<dbReference type="SUPFAM" id="SSF81442">
    <property type="entry name" value="Cytochrome c oxidase subunit I-like"/>
    <property type="match status" value="1"/>
</dbReference>
<dbReference type="SUPFAM" id="SSF56672">
    <property type="entry name" value="DNA/RNA polymerases"/>
    <property type="match status" value="1"/>
</dbReference>
<dbReference type="PROSITE" id="PS50855">
    <property type="entry name" value="COX1"/>
    <property type="match status" value="1"/>
</dbReference>
<dbReference type="PROSITE" id="PS50878">
    <property type="entry name" value="RT_POL"/>
    <property type="match status" value="1"/>
</dbReference>
<evidence type="ECO:0000255" key="1">
    <source>
        <dbReference type="PROSITE-ProRule" id="PRU00405"/>
    </source>
</evidence>
<evidence type="ECO:0000305" key="2"/>
<keyword id="KW-0496">Mitochondrion</keyword>
<keyword id="KW-1185">Reference proteome</keyword>
<comment type="subcellular location">
    <subcellularLocation>
        <location evidence="2">Mitochondrion</location>
    </subcellularLocation>
</comment>
<comment type="miscellaneous">
    <text>This protein is coded in group-II intron 2 of OXI3 (COX1).</text>
</comment>
<comment type="sequence caution" evidence="2">
    <conflict type="erroneous gene model prediction">
        <sequence resource="EMBL-CDS" id="CAA24060"/>
    </conflict>
</comment>
<feature type="chain" id="PRO_0000196881" description="Putative COX1/OXI3 intron 2 protein">
    <location>
        <begin position="1"/>
        <end position="854"/>
    </location>
</feature>
<feature type="domain" description="Reverse transcriptase" evidence="1">
    <location>
        <begin position="329"/>
        <end position="613"/>
    </location>
</feature>
<feature type="sequence conflict" description="In Ref. 1; CAA24060." evidence="2" ref="1">
    <original>V</original>
    <variation>A</variation>
    <location>
        <position position="236"/>
    </location>
</feature>
<feature type="sequence conflict" description="In Ref. 1; CAA24060." evidence="2" ref="1">
    <original>R</original>
    <variation>S</variation>
    <location>
        <position position="724"/>
    </location>
</feature>
<geneLocation type="mitochondrion"/>
<sequence length="854" mass="98008">MVQRWLYSTNAKDIAVLYFMLAIFSGMAGTAMSLIIRLELAAPGSQYLHGNSQLFNVLVVGHAVLMIFCAPFRLIYHCIEVLIDKHISVYSINENFTVSFWFWLLVVTYMVFRYVNHMAYPVGANSTGTMACHKSAGVKQPAQGKNCPMARLTNSCKECLGFSLTPSHLGIVIHAYVLEEEVHELTKNESLALSKSWHLEGCTSSNGKLRNTGLSERGNPGDNGVFMVPKFNLNKVRYFSTLSKLNARKEDSLAYLTKINTTDFSELNKLMENNHNKTETINTRILKLMSDIRMLLIAYNKIKSKKGNMSKGSNNITLDGINISYLNKLSKDINTNMFKFSPVRRVEIPKTSGGFRPLSVGNPREKIVQESMRMMLEIIYNNSFSYYSHGFRPNLSCLTAIIQCKNYMQYCNWFIKVDLNKCFDTIPHNMLINVLNERIKDKGFMDLLYKLLRAGYVDKNNNYHNTTLGIPQGSVVSPILCNIFLDKLDKYLENKFENEFNTGNMSNRGRNPIYNSLSSKIYRCKLLSEKLKLIRLRDHYQRNMGSDKSFKRAYFVRYADDIIIGVMGSHNDCKNILNDINNFLKENLGMSINMDKSVIKHSKEGVSFLGYDVKVTPWEKRPYRMIKKGDNFIRVRHHTSLVVNAPIRSIVMKLNKHGYCSHGILGKPRGVGRLIHEEMKTILMHYLAVGRGIMNYYRLATNFTTLRGRITYILFYSCCLTLARKFKLNTVKKVILKFGKVLVDPHSKVSFSIDDFKIRHKMNMTDSNYTPDEILDRYKYMLPRSLSLFSGICQICGSKHDLEVHHVRTLNNAANKIKDDYLLGRMIKMNRKQITICKTCHFKVHQGKYNGPGL</sequence>
<gene>
    <name type="primary">AI2</name>
    <name type="ordered locus">Q0055</name>
</gene>
<protein>
    <recommendedName>
        <fullName>Putative COX1/OXI3 intron 2 protein</fullName>
    </recommendedName>
</protein>
<name>AI2M_YEAST</name>
<proteinExistence type="predicted"/>
<reference key="1">
    <citation type="journal article" date="1980" name="J. Biol. Chem.">
        <title>Assembly of the mitochondrial membrane system. Structure and nucleotide sequence of the gene coding for subunit 1 of yeast cytochrome oxidase.</title>
        <authorList>
            <person name="Bonitz S.G."/>
            <person name="Coruzzi G."/>
            <person name="Thalenfeld B.E."/>
            <person name="Tzagoloff A."/>
            <person name="Macino G."/>
        </authorList>
    </citation>
    <scope>NUCLEOTIDE SEQUENCE [GENOMIC DNA]</scope>
    <source>
        <strain>ATCC 24657 / D273-10B</strain>
    </source>
</reference>
<reference key="2">
    <citation type="journal article" date="1998" name="FEBS Lett.">
        <title>The complete sequence of the mitochondrial genome of Saccharomyces cerevisiae.</title>
        <authorList>
            <person name="Foury F."/>
            <person name="Roganti T."/>
            <person name="Lecrenier N."/>
            <person name="Purnelle B."/>
        </authorList>
    </citation>
    <scope>NUCLEOTIDE SEQUENCE [LARGE SCALE GENOMIC DNA]</scope>
    <source>
        <strain>ATCC 96604 / S288c / FY1679</strain>
    </source>
</reference>
<reference key="3">
    <citation type="journal article" date="2014" name="G3 (Bethesda)">
        <title>The reference genome sequence of Saccharomyces cerevisiae: Then and now.</title>
        <authorList>
            <person name="Engel S.R."/>
            <person name="Dietrich F.S."/>
            <person name="Fisk D.G."/>
            <person name="Binkley G."/>
            <person name="Balakrishnan R."/>
            <person name="Costanzo M.C."/>
            <person name="Dwight S.S."/>
            <person name="Hitz B.C."/>
            <person name="Karra K."/>
            <person name="Nash R.S."/>
            <person name="Weng S."/>
            <person name="Wong E.D."/>
            <person name="Lloyd P."/>
            <person name="Skrzypek M.S."/>
            <person name="Miyasato S.R."/>
            <person name="Simison M."/>
            <person name="Cherry J.M."/>
        </authorList>
    </citation>
    <scope>GENOME REANNOTATION</scope>
    <source>
        <strain>ATCC 96604 / S288c / FY1679</strain>
    </source>
</reference>